<proteinExistence type="evidence at protein level"/>
<evidence type="ECO:0000269" key="1">
    <source>
    </source>
</evidence>
<reference key="1">
    <citation type="journal article" date="1997" name="Nature">
        <title>The nucleotide sequence of Saccharomyces cerevisiae chromosome V.</title>
        <authorList>
            <person name="Dietrich F.S."/>
            <person name="Mulligan J.T."/>
            <person name="Hennessy K.M."/>
            <person name="Yelton M.A."/>
            <person name="Allen E."/>
            <person name="Araujo R."/>
            <person name="Aviles E."/>
            <person name="Berno A."/>
            <person name="Brennan T."/>
            <person name="Carpenter J."/>
            <person name="Chen E."/>
            <person name="Cherry J.M."/>
            <person name="Chung E."/>
            <person name="Duncan M."/>
            <person name="Guzman E."/>
            <person name="Hartzell G."/>
            <person name="Hunicke-Smith S."/>
            <person name="Hyman R.W."/>
            <person name="Kayser A."/>
            <person name="Komp C."/>
            <person name="Lashkari D."/>
            <person name="Lew H."/>
            <person name="Lin D."/>
            <person name="Mosedale D."/>
            <person name="Nakahara K."/>
            <person name="Namath A."/>
            <person name="Norgren R."/>
            <person name="Oefner P."/>
            <person name="Oh C."/>
            <person name="Petel F.X."/>
            <person name="Roberts D."/>
            <person name="Sehl P."/>
            <person name="Schramm S."/>
            <person name="Shogren T."/>
            <person name="Smith V."/>
            <person name="Taylor P."/>
            <person name="Wei Y."/>
            <person name="Botstein D."/>
            <person name="Davis R.W."/>
        </authorList>
    </citation>
    <scope>NUCLEOTIDE SEQUENCE [LARGE SCALE GENOMIC DNA]</scope>
    <source>
        <strain>ATCC 204508 / S288c</strain>
    </source>
</reference>
<reference key="2">
    <citation type="journal article" date="2014" name="G3 (Bethesda)">
        <title>The reference genome sequence of Saccharomyces cerevisiae: Then and now.</title>
        <authorList>
            <person name="Engel S.R."/>
            <person name="Dietrich F.S."/>
            <person name="Fisk D.G."/>
            <person name="Binkley G."/>
            <person name="Balakrishnan R."/>
            <person name="Costanzo M.C."/>
            <person name="Dwight S.S."/>
            <person name="Hitz B.C."/>
            <person name="Karra K."/>
            <person name="Nash R.S."/>
            <person name="Weng S."/>
            <person name="Wong E.D."/>
            <person name="Lloyd P."/>
            <person name="Skrzypek M.S."/>
            <person name="Miyasato S.R."/>
            <person name="Simison M."/>
            <person name="Cherry J.M."/>
        </authorList>
    </citation>
    <scope>GENOME REANNOTATION</scope>
    <source>
        <strain>ATCC 204508 / S288c</strain>
    </source>
</reference>
<reference key="3">
    <citation type="journal article" date="2007" name="Genome Res.">
        <title>Approaching a complete repository of sequence-verified protein-encoding clones for Saccharomyces cerevisiae.</title>
        <authorList>
            <person name="Hu Y."/>
            <person name="Rolfs A."/>
            <person name="Bhullar B."/>
            <person name="Murthy T.V.S."/>
            <person name="Zhu C."/>
            <person name="Berger M.F."/>
            <person name="Camargo A.A."/>
            <person name="Kelley F."/>
            <person name="McCarron S."/>
            <person name="Jepson D."/>
            <person name="Richardson A."/>
            <person name="Raphael J."/>
            <person name="Moreira D."/>
            <person name="Taycher E."/>
            <person name="Zuo D."/>
            <person name="Mohr S."/>
            <person name="Kane M.F."/>
            <person name="Williamson J."/>
            <person name="Simpson A.J.G."/>
            <person name="Bulyk M.L."/>
            <person name="Harlow E."/>
            <person name="Marsischky G."/>
            <person name="Kolodner R.D."/>
            <person name="LaBaer J."/>
        </authorList>
    </citation>
    <scope>NUCLEOTIDE SEQUENCE [GENOMIC DNA]</scope>
    <source>
        <strain>ATCC 204508 / S288c</strain>
    </source>
</reference>
<reference key="4">
    <citation type="journal article" date="2003" name="Nature">
        <title>Global analysis of protein localization in budding yeast.</title>
        <authorList>
            <person name="Huh W.-K."/>
            <person name="Falvo J.V."/>
            <person name="Gerke L.C."/>
            <person name="Carroll A.S."/>
            <person name="Howson R.W."/>
            <person name="Weissman J.S."/>
            <person name="O'Shea E.K."/>
        </authorList>
    </citation>
    <scope>SUBCELLULAR LOCATION [LARGE SCALE ANALYSIS]</scope>
</reference>
<feature type="chain" id="PRO_0000202614" description="Uncharacterized protein YEL014C">
    <location>
        <begin position="1"/>
        <end position="101"/>
    </location>
</feature>
<protein>
    <recommendedName>
        <fullName>Uncharacterized protein YEL014C</fullName>
    </recommendedName>
</protein>
<gene>
    <name type="ordered locus">YEL014C</name>
</gene>
<accession>P39999</accession>
<accession>A0A1S0T059</accession>
<organism>
    <name type="scientific">Saccharomyces cerevisiae (strain ATCC 204508 / S288c)</name>
    <name type="common">Baker's yeast</name>
    <dbReference type="NCBI Taxonomy" id="559292"/>
    <lineage>
        <taxon>Eukaryota</taxon>
        <taxon>Fungi</taxon>
        <taxon>Dikarya</taxon>
        <taxon>Ascomycota</taxon>
        <taxon>Saccharomycotina</taxon>
        <taxon>Saccharomycetes</taxon>
        <taxon>Saccharomycetales</taxon>
        <taxon>Saccharomycetaceae</taxon>
        <taxon>Saccharomyces</taxon>
    </lineage>
</organism>
<sequence length="101" mass="12209">MTALFCLELRTNIFLIMNDCIIINYWKGFIFSFHSYFFPFRFESSLRAHYPGKRNYSDFSVIPLPYYIDVRSFHICESQHIIALPLQIPLPYRMLIRMYPV</sequence>
<name>YEB4_YEAST</name>
<comment type="subcellular location">
    <subcellularLocation>
        <location evidence="1">Cytoplasm</location>
    </subcellularLocation>
</comment>
<dbReference type="EMBL" id="U18530">
    <property type="protein sequence ID" value="AAB64491.1"/>
    <property type="molecule type" value="Genomic_DNA"/>
</dbReference>
<dbReference type="EMBL" id="AY693348">
    <property type="protein sequence ID" value="AAT93367.1"/>
    <property type="molecule type" value="Genomic_DNA"/>
</dbReference>
<dbReference type="EMBL" id="BK006939">
    <property type="protein sequence ID" value="DAA80285.1"/>
    <property type="molecule type" value="Genomic_DNA"/>
</dbReference>
<dbReference type="PIR" id="S50445">
    <property type="entry name" value="S50445"/>
</dbReference>
<dbReference type="RefSeq" id="NP_001335765.1">
    <property type="nucleotide sequence ID" value="NM_001348821.1"/>
</dbReference>
<dbReference type="FunCoup" id="P39999">
    <property type="interactions" value="13"/>
</dbReference>
<dbReference type="IntAct" id="P39999">
    <property type="interactions" value="2"/>
</dbReference>
<dbReference type="STRING" id="4932.YEL014C"/>
<dbReference type="PaxDb" id="4932-YEL014C"/>
<dbReference type="EnsemblFungi" id="YEL014C_mRNA">
    <property type="protein sequence ID" value="YEL014C"/>
    <property type="gene ID" value="YEL014C"/>
</dbReference>
<dbReference type="GeneID" id="856701"/>
<dbReference type="AGR" id="SGD:S000000740"/>
<dbReference type="SGD" id="S000000740">
    <property type="gene designation" value="YEL014C"/>
</dbReference>
<dbReference type="HOGENOM" id="CLU_2293876_0_0_1"/>
<dbReference type="InParanoid" id="P39999"/>
<dbReference type="PRO" id="PR:P39999"/>
<dbReference type="Proteomes" id="UP000002311">
    <property type="component" value="Chromosome V"/>
</dbReference>
<dbReference type="RNAct" id="P39999">
    <property type="molecule type" value="protein"/>
</dbReference>
<dbReference type="GO" id="GO:0005737">
    <property type="term" value="C:cytoplasm"/>
    <property type="evidence" value="ECO:0007669"/>
    <property type="project" value="UniProtKB-SubCell"/>
</dbReference>
<keyword id="KW-0963">Cytoplasm</keyword>
<keyword id="KW-1185">Reference proteome</keyword>